<reference key="1">
    <citation type="journal article" date="2008" name="Proc. Natl. Acad. Sci. U.S.A.">
        <title>Niche adaptation and genome expansion in the chlorophyll d-producing cyanobacterium Acaryochloris marina.</title>
        <authorList>
            <person name="Swingley W.D."/>
            <person name="Chen M."/>
            <person name="Cheung P.C."/>
            <person name="Conrad A.L."/>
            <person name="Dejesa L.C."/>
            <person name="Hao J."/>
            <person name="Honchak B.M."/>
            <person name="Karbach L.E."/>
            <person name="Kurdoglu A."/>
            <person name="Lahiri S."/>
            <person name="Mastrian S.D."/>
            <person name="Miyashita H."/>
            <person name="Page L."/>
            <person name="Ramakrishna P."/>
            <person name="Satoh S."/>
            <person name="Sattley W.M."/>
            <person name="Shimada Y."/>
            <person name="Taylor H.L."/>
            <person name="Tomo T."/>
            <person name="Tsuchiya T."/>
            <person name="Wang Z.T."/>
            <person name="Raymond J."/>
            <person name="Mimuro M."/>
            <person name="Blankenship R.E."/>
            <person name="Touchman J.W."/>
        </authorList>
    </citation>
    <scope>NUCLEOTIDE SEQUENCE [LARGE SCALE GENOMIC DNA]</scope>
    <source>
        <strain>MBIC 11017</strain>
    </source>
</reference>
<organism>
    <name type="scientific">Acaryochloris marina (strain MBIC 11017)</name>
    <dbReference type="NCBI Taxonomy" id="329726"/>
    <lineage>
        <taxon>Bacteria</taxon>
        <taxon>Bacillati</taxon>
        <taxon>Cyanobacteriota</taxon>
        <taxon>Cyanophyceae</taxon>
        <taxon>Acaryochloridales</taxon>
        <taxon>Acaryochloridaceae</taxon>
        <taxon>Acaryochloris</taxon>
    </lineage>
</organism>
<proteinExistence type="evidence at protein level"/>
<feature type="chain" id="PRO_1000080693" description="Photosystem II reaction center protein M">
    <location>
        <begin position="1"/>
        <end position="34"/>
    </location>
</feature>
<feature type="transmembrane region" description="Helical" evidence="1">
    <location>
        <begin position="6"/>
        <end position="26"/>
    </location>
</feature>
<feature type="helix" evidence="2">
    <location>
        <begin position="5"/>
        <end position="30"/>
    </location>
</feature>
<name>PSBM_ACAM1</name>
<keyword id="KW-0002">3D-structure</keyword>
<keyword id="KW-0472">Membrane</keyword>
<keyword id="KW-0602">Photosynthesis</keyword>
<keyword id="KW-0604">Photosystem II</keyword>
<keyword id="KW-0674">Reaction center</keyword>
<keyword id="KW-1185">Reference proteome</keyword>
<keyword id="KW-0793">Thylakoid</keyword>
<keyword id="KW-0812">Transmembrane</keyword>
<keyword id="KW-1133">Transmembrane helix</keyword>
<gene>
    <name evidence="1" type="primary">psbM</name>
    <name type="ordered locus">AM1_2024</name>
</gene>
<evidence type="ECO:0000255" key="1">
    <source>
        <dbReference type="HAMAP-Rule" id="MF_00438"/>
    </source>
</evidence>
<evidence type="ECO:0007829" key="2">
    <source>
        <dbReference type="PDB" id="7YMI"/>
    </source>
</evidence>
<comment type="function">
    <text evidence="1">One of the components of the core complex of photosystem II (PSII). PSII is a light-driven water:plastoquinone oxidoreductase that uses light energy to abstract electrons from H(2)O, generating O(2) and a proton gradient subsequently used for ATP formation. It consists of a core antenna complex that captures photons, and an electron transfer chain that converts photonic excitation into a charge separation. This subunit is found at the monomer-monomer interface.</text>
</comment>
<comment type="subunit">
    <text evidence="1">PSII is composed of 1 copy each of membrane proteins PsbA, PsbB, PsbC, PsbD, PsbE, PsbF, PsbH, PsbI, PsbJ, PsbK, PsbL, PsbM, PsbT, PsbX, PsbY, PsbZ, Psb30/Ycf12, peripheral proteins PsbO, CyanoQ (PsbQ), PsbU, PsbV and a large number of cofactors. It forms dimeric complexes.</text>
</comment>
<comment type="subcellular location">
    <subcellularLocation>
        <location evidence="1">Cellular thylakoid membrane</location>
        <topology evidence="1">Single-pass membrane protein</topology>
    </subcellularLocation>
</comment>
<comment type="similarity">
    <text evidence="1">Belongs to the PsbM family.</text>
</comment>
<protein>
    <recommendedName>
        <fullName evidence="1">Photosystem II reaction center protein M</fullName>
        <shortName evidence="1">PSII-M</shortName>
    </recommendedName>
</protein>
<accession>B0CFM0</accession>
<sequence length="34" mass="3613">MPVNDLGAIATALFVFIPCVFLILLYAQTASRGS</sequence>
<dbReference type="EMBL" id="CP000828">
    <property type="protein sequence ID" value="ABW27039.1"/>
    <property type="molecule type" value="Genomic_DNA"/>
</dbReference>
<dbReference type="RefSeq" id="WP_010474494.1">
    <property type="nucleotide sequence ID" value="NC_009925.1"/>
</dbReference>
<dbReference type="PDB" id="7YMI">
    <property type="method" value="EM"/>
    <property type="resolution" value="3.30 A"/>
    <property type="chains" value="M/m=1-34"/>
</dbReference>
<dbReference type="PDB" id="7YMM">
    <property type="method" value="EM"/>
    <property type="resolution" value="3.60 A"/>
    <property type="chains" value="1M/2M/3M/4M=1-34"/>
</dbReference>
<dbReference type="PDBsum" id="7YMI"/>
<dbReference type="PDBsum" id="7YMM"/>
<dbReference type="EMDB" id="EMD-33929"/>
<dbReference type="EMDB" id="EMD-33933"/>
<dbReference type="SMR" id="B0CFM0"/>
<dbReference type="STRING" id="329726.AM1_2024"/>
<dbReference type="KEGG" id="amr:AM1_2024"/>
<dbReference type="HOGENOM" id="CLU_215415_0_0_3"/>
<dbReference type="OrthoDB" id="532820at2"/>
<dbReference type="Proteomes" id="UP000000268">
    <property type="component" value="Chromosome"/>
</dbReference>
<dbReference type="GO" id="GO:0009523">
    <property type="term" value="C:photosystem II"/>
    <property type="evidence" value="ECO:0007669"/>
    <property type="project" value="UniProtKB-KW"/>
</dbReference>
<dbReference type="GO" id="GO:0031676">
    <property type="term" value="C:plasma membrane-derived thylakoid membrane"/>
    <property type="evidence" value="ECO:0007669"/>
    <property type="project" value="UniProtKB-SubCell"/>
</dbReference>
<dbReference type="GO" id="GO:0019684">
    <property type="term" value="P:photosynthesis, light reaction"/>
    <property type="evidence" value="ECO:0007669"/>
    <property type="project" value="InterPro"/>
</dbReference>
<dbReference type="HAMAP" id="MF_00438">
    <property type="entry name" value="PSII_PsbM"/>
    <property type="match status" value="1"/>
</dbReference>
<dbReference type="InterPro" id="IPR007826">
    <property type="entry name" value="PSII_PsbM"/>
</dbReference>
<dbReference type="InterPro" id="IPR037269">
    <property type="entry name" value="PSII_PsbM_sf"/>
</dbReference>
<dbReference type="NCBIfam" id="TIGR03038">
    <property type="entry name" value="PS_II_psbM"/>
    <property type="match status" value="1"/>
</dbReference>
<dbReference type="Pfam" id="PF05151">
    <property type="entry name" value="PsbM"/>
    <property type="match status" value="1"/>
</dbReference>
<dbReference type="SUPFAM" id="SSF161033">
    <property type="entry name" value="Photosystem II reaction center protein M, PsbM"/>
    <property type="match status" value="1"/>
</dbReference>